<organism>
    <name type="scientific">Haemophilus influenzae (strain ATCC 51907 / DSM 11121 / KW20 / Rd)</name>
    <dbReference type="NCBI Taxonomy" id="71421"/>
    <lineage>
        <taxon>Bacteria</taxon>
        <taxon>Pseudomonadati</taxon>
        <taxon>Pseudomonadota</taxon>
        <taxon>Gammaproteobacteria</taxon>
        <taxon>Pasteurellales</taxon>
        <taxon>Pasteurellaceae</taxon>
        <taxon>Haemophilus</taxon>
    </lineage>
</organism>
<proteinExistence type="predicted"/>
<dbReference type="EMBL" id="L42023">
    <property type="protein sequence ID" value="AAC22993.1"/>
    <property type="molecule type" value="Genomic_DNA"/>
</dbReference>
<dbReference type="PIR" id="D64026">
    <property type="entry name" value="D64026"/>
</dbReference>
<dbReference type="RefSeq" id="NP_439492.1">
    <property type="nucleotide sequence ID" value="NC_000907.1"/>
</dbReference>
<dbReference type="STRING" id="71421.HI_1341"/>
<dbReference type="EnsemblBacteria" id="AAC22993">
    <property type="protein sequence ID" value="AAC22993"/>
    <property type="gene ID" value="HI_1341"/>
</dbReference>
<dbReference type="KEGG" id="hin:HI_1341"/>
<dbReference type="PATRIC" id="fig|71421.8.peg.1393"/>
<dbReference type="eggNOG" id="COG5595">
    <property type="taxonomic scope" value="Bacteria"/>
</dbReference>
<dbReference type="HOGENOM" id="CLU_1347341_0_0_6"/>
<dbReference type="OrthoDB" id="5589102at2"/>
<dbReference type="PhylomeDB" id="P44166"/>
<dbReference type="BioCyc" id="HINF71421:G1GJ1-1366-MONOMER"/>
<dbReference type="Proteomes" id="UP000000579">
    <property type="component" value="Chromosome"/>
</dbReference>
<dbReference type="InterPro" id="IPR016908">
    <property type="entry name" value="UCP029037"/>
</dbReference>
<dbReference type="Pfam" id="PF10071">
    <property type="entry name" value="DUF2310"/>
    <property type="match status" value="1"/>
</dbReference>
<feature type="chain" id="PRO_0000078031" description="Uncharacterized protein HI_1341">
    <location>
        <begin position="1"/>
        <end position="203"/>
    </location>
</feature>
<name>Y1341_HAEIN</name>
<accession>P44166</accession>
<reference key="1">
    <citation type="journal article" date="1995" name="Science">
        <title>Whole-genome random sequencing and assembly of Haemophilus influenzae Rd.</title>
        <authorList>
            <person name="Fleischmann R.D."/>
            <person name="Adams M.D."/>
            <person name="White O."/>
            <person name="Clayton R.A."/>
            <person name="Kirkness E.F."/>
            <person name="Kerlavage A.R."/>
            <person name="Bult C.J."/>
            <person name="Tomb J.-F."/>
            <person name="Dougherty B.A."/>
            <person name="Merrick J.M."/>
            <person name="McKenney K."/>
            <person name="Sutton G.G."/>
            <person name="FitzHugh W."/>
            <person name="Fields C.A."/>
            <person name="Gocayne J.D."/>
            <person name="Scott J.D."/>
            <person name="Shirley R."/>
            <person name="Liu L.-I."/>
            <person name="Glodek A."/>
            <person name="Kelley J.M."/>
            <person name="Weidman J.F."/>
            <person name="Phillips C.A."/>
            <person name="Spriggs T."/>
            <person name="Hedblom E."/>
            <person name="Cotton M.D."/>
            <person name="Utterback T.R."/>
            <person name="Hanna M.C."/>
            <person name="Nguyen D.T."/>
            <person name="Saudek D.M."/>
            <person name="Brandon R.C."/>
            <person name="Fine L.D."/>
            <person name="Fritchman J.L."/>
            <person name="Fuhrmann J.L."/>
            <person name="Geoghagen N.S.M."/>
            <person name="Gnehm C.L."/>
            <person name="McDonald L.A."/>
            <person name="Small K.V."/>
            <person name="Fraser C.M."/>
            <person name="Smith H.O."/>
            <person name="Venter J.C."/>
        </authorList>
    </citation>
    <scope>NUCLEOTIDE SEQUENCE [LARGE SCALE GENOMIC DNA]</scope>
    <source>
        <strain>ATCC 51907 / DSM 11121 / KW20 / Rd</strain>
    </source>
</reference>
<keyword id="KW-1185">Reference proteome</keyword>
<protein>
    <recommendedName>
        <fullName>Uncharacterized protein HI_1341</fullName>
    </recommendedName>
</protein>
<sequence>MLCWIGYKNGILPQQNSTLYPWLNPSKCGVIFDGFQLVGDDFNSDQTAENTSPAWQVLYTTHLQSCSPIHSGENFAPIPLYKQLKNQPHLSQDLIKWQENWQACDQLQMNGAVLEQQSLAEISDHQSTLSKHGRYLAQEIEKETGIPTYYYLYRVGGQSLESEKSRCCPSCGANWALKDAIFDTFHFKCDTCRLVSNLSWNFL</sequence>
<gene>
    <name type="ordered locus">HI_1341</name>
</gene>